<organism>
    <name type="scientific">Arabidopsis thaliana</name>
    <name type="common">Mouse-ear cress</name>
    <dbReference type="NCBI Taxonomy" id="3702"/>
    <lineage>
        <taxon>Eukaryota</taxon>
        <taxon>Viridiplantae</taxon>
        <taxon>Streptophyta</taxon>
        <taxon>Embryophyta</taxon>
        <taxon>Tracheophyta</taxon>
        <taxon>Spermatophyta</taxon>
        <taxon>Magnoliopsida</taxon>
        <taxon>eudicotyledons</taxon>
        <taxon>Gunneridae</taxon>
        <taxon>Pentapetalae</taxon>
        <taxon>rosids</taxon>
        <taxon>malvids</taxon>
        <taxon>Brassicales</taxon>
        <taxon>Brassicaceae</taxon>
        <taxon>Camelineae</taxon>
        <taxon>Arabidopsis</taxon>
    </lineage>
</organism>
<name>MES11_ARATH</name>
<gene>
    <name evidence="5" type="primary">MES11</name>
    <name evidence="7" type="ordered locus">At3g29770</name>
    <name evidence="9" type="ORF">T26G12.12</name>
</gene>
<gene>
    <name type="ordered locus">At1gXXXXX</name>
    <name evidence="8" type="ORF">F13E17.2</name>
</gene>
<sequence>MGNLCSLFTPPKPVKKRKPITKRQSSIGASSSGSGLNSNRWNNRVRSSSSRRDNKFEDALIQEHALAAAAVLFRQQNGGGGSLPFDRSASQRYQGSCSKKNQLPRSSSSRSRSSTDPLLQPHQFLNQGIKLDDLETNHFVLVHGGSFGAWCWYKTIALLEEDGFKVTAIDLAGCGINSININGIASLSQYVKPLTDILEKLPIGEKVILVGHDFGGACISYAMELFPSKISKAVFLAAAMLTNGQSTLDMFSLKAGQNDLMRKAQIFIYTNGNENPPTAIDLDKSLLKDLLFNQSPSKDVALASVSMRSIPFAPVLEKLSLSDANYGSVRRYYIETLEDNAIPVTLQENMINSSPPEKVYRLKGADHAPFFSKPQALHKLLLEIARISPA</sequence>
<dbReference type="EC" id="3.1.1.-" evidence="2"/>
<dbReference type="EMBL" id="AP002064">
    <property type="status" value="NOT_ANNOTATED_CDS"/>
    <property type="molecule type" value="Genomic_DNA"/>
</dbReference>
<dbReference type="EMBL" id="AC074284">
    <property type="protein sequence ID" value="AAG12619.1"/>
    <property type="molecule type" value="Genomic_DNA"/>
</dbReference>
<dbReference type="EMBL" id="CP002686">
    <property type="protein sequence ID" value="AEE77609.1"/>
    <property type="molecule type" value="Genomic_DNA"/>
</dbReference>
<dbReference type="EMBL" id="BT003149">
    <property type="protein sequence ID" value="AAO24581.1"/>
    <property type="molecule type" value="mRNA"/>
</dbReference>
<dbReference type="RefSeq" id="NP_189622.1">
    <property type="nucleotide sequence ID" value="NM_113902.4"/>
</dbReference>
<dbReference type="SMR" id="Q9FW03"/>
<dbReference type="BioGRID" id="8004">
    <property type="interactions" value="2"/>
</dbReference>
<dbReference type="FunCoup" id="Q9FW03">
    <property type="interactions" value="2"/>
</dbReference>
<dbReference type="IntAct" id="Q9FW03">
    <property type="interactions" value="2"/>
</dbReference>
<dbReference type="ESTHER" id="arath-MES11">
    <property type="family name" value="Hydroxynitrile_lyase"/>
</dbReference>
<dbReference type="iPTMnet" id="Q9FW03"/>
<dbReference type="PaxDb" id="3702-AT3G29770.1"/>
<dbReference type="ProteomicsDB" id="238957"/>
<dbReference type="EnsemblPlants" id="AT3G29770.1">
    <property type="protein sequence ID" value="AT3G29770.1"/>
    <property type="gene ID" value="AT3G29770"/>
</dbReference>
<dbReference type="GeneID" id="822677"/>
<dbReference type="Gramene" id="AT3G29770.1">
    <property type="protein sequence ID" value="AT3G29770.1"/>
    <property type="gene ID" value="AT3G29770"/>
</dbReference>
<dbReference type="KEGG" id="ath:AT3G29770"/>
<dbReference type="Araport" id="AT3G29770"/>
<dbReference type="TAIR" id="AT3G29770">
    <property type="gene designation" value="MES11"/>
</dbReference>
<dbReference type="eggNOG" id="ENOG502QRBN">
    <property type="taxonomic scope" value="Eukaryota"/>
</dbReference>
<dbReference type="HOGENOM" id="CLU_046066_8_1_1"/>
<dbReference type="InParanoid" id="Q9FW03"/>
<dbReference type="OMA" id="MCDMNPP"/>
<dbReference type="PhylomeDB" id="Q9FW03"/>
<dbReference type="BioCyc" id="ARA:AT3G29770-MONOMER"/>
<dbReference type="PRO" id="PR:Q9FW03"/>
<dbReference type="Proteomes" id="UP000006548">
    <property type="component" value="Chromosome 3"/>
</dbReference>
<dbReference type="ExpressionAtlas" id="Q9FW03">
    <property type="expression patterns" value="baseline and differential"/>
</dbReference>
<dbReference type="GO" id="GO:0009507">
    <property type="term" value="C:chloroplast"/>
    <property type="evidence" value="ECO:0007669"/>
    <property type="project" value="UniProtKB-SubCell"/>
</dbReference>
<dbReference type="GO" id="GO:0016787">
    <property type="term" value="F:hydrolase activity"/>
    <property type="evidence" value="ECO:0007669"/>
    <property type="project" value="UniProtKB-KW"/>
</dbReference>
<dbReference type="FunFam" id="3.40.50.1820:FF:000025">
    <property type="entry name" value="putative methylesterase 11, chloroplastic"/>
    <property type="match status" value="1"/>
</dbReference>
<dbReference type="Gene3D" id="3.40.50.1820">
    <property type="entry name" value="alpha/beta hydrolase"/>
    <property type="match status" value="1"/>
</dbReference>
<dbReference type="InterPro" id="IPR000073">
    <property type="entry name" value="AB_hydrolase_1"/>
</dbReference>
<dbReference type="InterPro" id="IPR029058">
    <property type="entry name" value="AB_hydrolase_fold"/>
</dbReference>
<dbReference type="InterPro" id="IPR045889">
    <property type="entry name" value="MES/HNL"/>
</dbReference>
<dbReference type="PANTHER" id="PTHR10992:SF872">
    <property type="entry name" value="METHYLESTERASE 11, CHLOROPLASTIC-RELATED"/>
    <property type="match status" value="1"/>
</dbReference>
<dbReference type="PANTHER" id="PTHR10992">
    <property type="entry name" value="METHYLESTERASE FAMILY MEMBER"/>
    <property type="match status" value="1"/>
</dbReference>
<dbReference type="Pfam" id="PF00561">
    <property type="entry name" value="Abhydrolase_1"/>
    <property type="match status" value="1"/>
</dbReference>
<dbReference type="SUPFAM" id="SSF53474">
    <property type="entry name" value="alpha/beta-Hydrolases"/>
    <property type="match status" value="1"/>
</dbReference>
<accession>Q9FW03</accession>
<protein>
    <recommendedName>
        <fullName evidence="5">Putative methylesterase 11, chloroplastic</fullName>
        <shortName evidence="5">AtMES11</shortName>
        <ecNumber evidence="2">3.1.1.-</ecNumber>
    </recommendedName>
</protein>
<evidence type="ECO:0000250" key="1">
    <source>
        <dbReference type="UniProtKB" id="Q6RYA0"/>
    </source>
</evidence>
<evidence type="ECO:0000250" key="2">
    <source>
        <dbReference type="UniProtKB" id="Q9SG92"/>
    </source>
</evidence>
<evidence type="ECO:0000255" key="3"/>
<evidence type="ECO:0000256" key="4">
    <source>
        <dbReference type="SAM" id="MobiDB-lite"/>
    </source>
</evidence>
<evidence type="ECO:0000303" key="5">
    <source>
    </source>
</evidence>
<evidence type="ECO:0000305" key="6"/>
<evidence type="ECO:0000312" key="7">
    <source>
        <dbReference type="Araport" id="AT3G29770"/>
    </source>
</evidence>
<evidence type="ECO:0000312" key="8">
    <source>
        <dbReference type="EMBL" id="AAG12619.1"/>
    </source>
</evidence>
<evidence type="ECO:0000312" key="9">
    <source>
        <dbReference type="EMBL" id="AP002064"/>
    </source>
</evidence>
<keyword id="KW-0150">Chloroplast</keyword>
<keyword id="KW-0378">Hydrolase</keyword>
<keyword id="KW-0934">Plastid</keyword>
<keyword id="KW-1185">Reference proteome</keyword>
<keyword id="KW-0809">Transit peptide</keyword>
<proteinExistence type="evidence at protein level"/>
<feature type="transit peptide" description="Chloroplast" evidence="3">
    <location>
        <begin position="1"/>
        <end position="46"/>
    </location>
</feature>
<feature type="chain" id="PRO_0000418185" description="Putative methylesterase 11, chloroplastic">
    <location>
        <begin position="47"/>
        <end position="390"/>
    </location>
</feature>
<feature type="domain" description="AB hydrolase-1" evidence="3">
    <location>
        <begin position="137"/>
        <end position="241"/>
    </location>
</feature>
<feature type="region of interest" description="Disordered" evidence="4">
    <location>
        <begin position="1"/>
        <end position="52"/>
    </location>
</feature>
<feature type="region of interest" description="Disordered" evidence="4">
    <location>
        <begin position="94"/>
        <end position="119"/>
    </location>
</feature>
<feature type="compositionally biased region" description="Low complexity" evidence="4">
    <location>
        <begin position="25"/>
        <end position="48"/>
    </location>
</feature>
<feature type="compositionally biased region" description="Polar residues" evidence="4">
    <location>
        <begin position="94"/>
        <end position="104"/>
    </location>
</feature>
<feature type="compositionally biased region" description="Low complexity" evidence="4">
    <location>
        <begin position="105"/>
        <end position="114"/>
    </location>
</feature>
<feature type="active site" description="Acyl-ester intermediate" evidence="1">
    <location>
        <position position="213"/>
    </location>
</feature>
<feature type="active site" description="Charge relay system" evidence="1">
    <location>
        <position position="339"/>
    </location>
</feature>
<feature type="active site" description="Charge relay system" evidence="1">
    <location>
        <position position="367"/>
    </location>
</feature>
<comment type="function">
    <text>Putative methylesterase.</text>
</comment>
<comment type="interaction">
    <interactant intactId="EBI-4426271">
        <id>Q9FW03</id>
    </interactant>
    <interactant intactId="EBI-4424361">
        <id>Q9SZI2</id>
        <label>NAP1;1</label>
    </interactant>
    <organismsDiffer>false</organismsDiffer>
    <experiments>3</experiments>
</comment>
<comment type="subcellular location">
    <subcellularLocation>
        <location evidence="6">Plastid</location>
        <location evidence="6">Chloroplast</location>
    </subcellularLocation>
</comment>
<comment type="similarity">
    <text evidence="6">Belongs to the AB hydrolase superfamily. Methylesterase family.</text>
</comment>
<reference key="1">
    <citation type="journal article" date="2000" name="DNA Res.">
        <title>Structural analysis of Arabidopsis thaliana chromosome 3. II. Sequence features of the 4,251,695 bp regions covered by 90 P1, TAC and BAC clones.</title>
        <authorList>
            <person name="Kaneko T."/>
            <person name="Katoh T."/>
            <person name="Sato S."/>
            <person name="Nakamura Y."/>
            <person name="Asamizu E."/>
            <person name="Tabata S."/>
        </authorList>
    </citation>
    <scope>NUCLEOTIDE SEQUENCE [LARGE SCALE GENOMIC DNA]</scope>
    <source>
        <strain>cv. Columbia</strain>
    </source>
</reference>
<reference key="2">
    <citation type="journal article" date="2000" name="Nature">
        <title>Sequence and analysis of chromosome 1 of the plant Arabidopsis thaliana.</title>
        <authorList>
            <person name="Theologis A."/>
            <person name="Ecker J.R."/>
            <person name="Palm C.J."/>
            <person name="Federspiel N.A."/>
            <person name="Kaul S."/>
            <person name="White O."/>
            <person name="Alonso J."/>
            <person name="Altafi H."/>
            <person name="Araujo R."/>
            <person name="Bowman C.L."/>
            <person name="Brooks S.Y."/>
            <person name="Buehler E."/>
            <person name="Chan A."/>
            <person name="Chao Q."/>
            <person name="Chen H."/>
            <person name="Cheuk R.F."/>
            <person name="Chin C.W."/>
            <person name="Chung M.K."/>
            <person name="Conn L."/>
            <person name="Conway A.B."/>
            <person name="Conway A.R."/>
            <person name="Creasy T.H."/>
            <person name="Dewar K."/>
            <person name="Dunn P."/>
            <person name="Etgu P."/>
            <person name="Feldblyum T.V."/>
            <person name="Feng J.-D."/>
            <person name="Fong B."/>
            <person name="Fujii C.Y."/>
            <person name="Gill J.E."/>
            <person name="Goldsmith A.D."/>
            <person name="Haas B."/>
            <person name="Hansen N.F."/>
            <person name="Hughes B."/>
            <person name="Huizar L."/>
            <person name="Hunter J.L."/>
            <person name="Jenkins J."/>
            <person name="Johnson-Hopson C."/>
            <person name="Khan S."/>
            <person name="Khaykin E."/>
            <person name="Kim C.J."/>
            <person name="Koo H.L."/>
            <person name="Kremenetskaia I."/>
            <person name="Kurtz D.B."/>
            <person name="Kwan A."/>
            <person name="Lam B."/>
            <person name="Langin-Hooper S."/>
            <person name="Lee A."/>
            <person name="Lee J.M."/>
            <person name="Lenz C.A."/>
            <person name="Li J.H."/>
            <person name="Li Y.-P."/>
            <person name="Lin X."/>
            <person name="Liu S.X."/>
            <person name="Liu Z.A."/>
            <person name="Luros J.S."/>
            <person name="Maiti R."/>
            <person name="Marziali A."/>
            <person name="Militscher J."/>
            <person name="Miranda M."/>
            <person name="Nguyen M."/>
            <person name="Nierman W.C."/>
            <person name="Osborne B.I."/>
            <person name="Pai G."/>
            <person name="Peterson J."/>
            <person name="Pham P.K."/>
            <person name="Rizzo M."/>
            <person name="Rooney T."/>
            <person name="Rowley D."/>
            <person name="Sakano H."/>
            <person name="Salzberg S.L."/>
            <person name="Schwartz J.R."/>
            <person name="Shinn P."/>
            <person name="Southwick A.M."/>
            <person name="Sun H."/>
            <person name="Tallon L.J."/>
            <person name="Tambunga G."/>
            <person name="Toriumi M.J."/>
            <person name="Town C.D."/>
            <person name="Utterback T."/>
            <person name="Van Aken S."/>
            <person name="Vaysberg M."/>
            <person name="Vysotskaia V.S."/>
            <person name="Walker M."/>
            <person name="Wu D."/>
            <person name="Yu G."/>
            <person name="Fraser C.M."/>
            <person name="Venter J.C."/>
            <person name="Davis R.W."/>
        </authorList>
    </citation>
    <scope>NUCLEOTIDE SEQUENCE [LARGE SCALE GENOMIC DNA]</scope>
    <source>
        <strain>cv. Columbia</strain>
    </source>
</reference>
<reference key="3">
    <citation type="journal article" date="2017" name="Plant J.">
        <title>Araport11: a complete reannotation of the Arabidopsis thaliana reference genome.</title>
        <authorList>
            <person name="Cheng C.Y."/>
            <person name="Krishnakumar V."/>
            <person name="Chan A.P."/>
            <person name="Thibaud-Nissen F."/>
            <person name="Schobel S."/>
            <person name="Town C.D."/>
        </authorList>
    </citation>
    <scope>GENOME REANNOTATION</scope>
    <source>
        <strain>cv. Columbia</strain>
    </source>
</reference>
<reference key="4">
    <citation type="journal article" date="2003" name="Science">
        <title>Empirical analysis of transcriptional activity in the Arabidopsis genome.</title>
        <authorList>
            <person name="Yamada K."/>
            <person name="Lim J."/>
            <person name="Dale J.M."/>
            <person name="Chen H."/>
            <person name="Shinn P."/>
            <person name="Palm C.J."/>
            <person name="Southwick A.M."/>
            <person name="Wu H.C."/>
            <person name="Kim C.J."/>
            <person name="Nguyen M."/>
            <person name="Pham P.K."/>
            <person name="Cheuk R.F."/>
            <person name="Karlin-Newmann G."/>
            <person name="Liu S.X."/>
            <person name="Lam B."/>
            <person name="Sakano H."/>
            <person name="Wu T."/>
            <person name="Yu G."/>
            <person name="Miranda M."/>
            <person name="Quach H.L."/>
            <person name="Tripp M."/>
            <person name="Chang C.H."/>
            <person name="Lee J.M."/>
            <person name="Toriumi M.J."/>
            <person name="Chan M.M."/>
            <person name="Tang C.C."/>
            <person name="Onodera C.S."/>
            <person name="Deng J.M."/>
            <person name="Akiyama K."/>
            <person name="Ansari Y."/>
            <person name="Arakawa T."/>
            <person name="Banh J."/>
            <person name="Banno F."/>
            <person name="Bowser L."/>
            <person name="Brooks S.Y."/>
            <person name="Carninci P."/>
            <person name="Chao Q."/>
            <person name="Choy N."/>
            <person name="Enju A."/>
            <person name="Goldsmith A.D."/>
            <person name="Gurjal M."/>
            <person name="Hansen N.F."/>
            <person name="Hayashizaki Y."/>
            <person name="Johnson-Hopson C."/>
            <person name="Hsuan V.W."/>
            <person name="Iida K."/>
            <person name="Karnes M."/>
            <person name="Khan S."/>
            <person name="Koesema E."/>
            <person name="Ishida J."/>
            <person name="Jiang P.X."/>
            <person name="Jones T."/>
            <person name="Kawai J."/>
            <person name="Kamiya A."/>
            <person name="Meyers C."/>
            <person name="Nakajima M."/>
            <person name="Narusaka M."/>
            <person name="Seki M."/>
            <person name="Sakurai T."/>
            <person name="Satou M."/>
            <person name="Tamse R."/>
            <person name="Vaysberg M."/>
            <person name="Wallender E.K."/>
            <person name="Wong C."/>
            <person name="Yamamura Y."/>
            <person name="Yuan S."/>
            <person name="Shinozaki K."/>
            <person name="Davis R.W."/>
            <person name="Theologis A."/>
            <person name="Ecker J.R."/>
        </authorList>
    </citation>
    <scope>NUCLEOTIDE SEQUENCE [LARGE SCALE MRNA]</scope>
    <source>
        <strain>cv. Columbia</strain>
    </source>
</reference>
<reference key="5">
    <citation type="journal article" date="2008" name="Plant Physiol.">
        <title>Inactive methyl indole-3-acetic acid ester can be hydrolyzed and activated by several esterases belonging to the AtMES esterase family of Arabidopsis.</title>
        <authorList>
            <person name="Yang Y."/>
            <person name="Xu R."/>
            <person name="Ma C.J."/>
            <person name="Vlot A.C."/>
            <person name="Klessig D.F."/>
            <person name="Pichersky E."/>
        </authorList>
    </citation>
    <scope>GENE FAMILY</scope>
</reference>